<proteinExistence type="inferred from homology"/>
<evidence type="ECO:0000255" key="1">
    <source>
        <dbReference type="HAMAP-Rule" id="MF_00050"/>
    </source>
</evidence>
<sequence length="271" mass="28799">MANYTAADVKRLRELTGAGMLDSKNALVEAEGDFDKAVELLRIKGAKDVGKRAERATAEGLVAAKDGALIELNSETDFVAKNGEFQALADQIVAAAAAAKAADVDALKAVKLGDTTVEQAIADLSAKIGEKLELRRATYFDGTTETYLHKRAADLPPAVGVLVEYTGGDTSAAHAVALQIAALKAKYLTREDVPADIVANERRIAEETARNEGKPEQALSKIVEGRVTGFYKDVVLLDQPAVSDNKKSVKALLDEAGVTVTRFVRFEVGQA</sequence>
<comment type="function">
    <text evidence="1">Associates with the EF-Tu.GDP complex and induces the exchange of GDP to GTP. It remains bound to the aminoacyl-tRNA.EF-Tu.GTP complex up to the GTP hydrolysis stage on the ribosome.</text>
</comment>
<comment type="subcellular location">
    <subcellularLocation>
        <location evidence="1">Cytoplasm</location>
    </subcellularLocation>
</comment>
<comment type="similarity">
    <text evidence="1">Belongs to the EF-Ts family.</text>
</comment>
<feature type="chain" id="PRO_1000006134" description="Elongation factor Ts">
    <location>
        <begin position="1"/>
        <end position="271"/>
    </location>
</feature>
<feature type="region of interest" description="Involved in Mg(2+) ion dislocation from EF-Tu" evidence="1">
    <location>
        <begin position="76"/>
        <end position="79"/>
    </location>
</feature>
<gene>
    <name evidence="1" type="primary">tsf</name>
    <name type="ordered locus">Mvan_2210</name>
</gene>
<name>EFTS_MYCVP</name>
<dbReference type="EMBL" id="CP000511">
    <property type="protein sequence ID" value="ABM13024.1"/>
    <property type="molecule type" value="Genomic_DNA"/>
</dbReference>
<dbReference type="RefSeq" id="WP_011779437.1">
    <property type="nucleotide sequence ID" value="NC_008726.1"/>
</dbReference>
<dbReference type="SMR" id="A1T774"/>
<dbReference type="STRING" id="350058.Mvan_2210"/>
<dbReference type="KEGG" id="mva:Mvan_2210"/>
<dbReference type="eggNOG" id="COG0264">
    <property type="taxonomic scope" value="Bacteria"/>
</dbReference>
<dbReference type="HOGENOM" id="CLU_047155_0_0_11"/>
<dbReference type="Proteomes" id="UP000009159">
    <property type="component" value="Chromosome"/>
</dbReference>
<dbReference type="GO" id="GO:0005737">
    <property type="term" value="C:cytoplasm"/>
    <property type="evidence" value="ECO:0007669"/>
    <property type="project" value="UniProtKB-SubCell"/>
</dbReference>
<dbReference type="GO" id="GO:0003746">
    <property type="term" value="F:translation elongation factor activity"/>
    <property type="evidence" value="ECO:0007669"/>
    <property type="project" value="UniProtKB-UniRule"/>
</dbReference>
<dbReference type="CDD" id="cd14275">
    <property type="entry name" value="UBA_EF-Ts"/>
    <property type="match status" value="1"/>
</dbReference>
<dbReference type="FunFam" id="1.10.286.20:FF:000001">
    <property type="entry name" value="Elongation factor Ts"/>
    <property type="match status" value="1"/>
</dbReference>
<dbReference type="FunFam" id="1.10.8.10:FF:000001">
    <property type="entry name" value="Elongation factor Ts"/>
    <property type="match status" value="1"/>
</dbReference>
<dbReference type="Gene3D" id="1.10.286.20">
    <property type="match status" value="1"/>
</dbReference>
<dbReference type="Gene3D" id="1.10.8.10">
    <property type="entry name" value="DNA helicase RuvA subunit, C-terminal domain"/>
    <property type="match status" value="1"/>
</dbReference>
<dbReference type="Gene3D" id="3.30.479.20">
    <property type="entry name" value="Elongation factor Ts, dimerisation domain"/>
    <property type="match status" value="2"/>
</dbReference>
<dbReference type="HAMAP" id="MF_00050">
    <property type="entry name" value="EF_Ts"/>
    <property type="match status" value="1"/>
</dbReference>
<dbReference type="InterPro" id="IPR036402">
    <property type="entry name" value="EF-Ts_dimer_sf"/>
</dbReference>
<dbReference type="InterPro" id="IPR001816">
    <property type="entry name" value="Transl_elong_EFTs/EF1B"/>
</dbReference>
<dbReference type="InterPro" id="IPR014039">
    <property type="entry name" value="Transl_elong_EFTs/EF1B_dimer"/>
</dbReference>
<dbReference type="InterPro" id="IPR018101">
    <property type="entry name" value="Transl_elong_Ts_CS"/>
</dbReference>
<dbReference type="InterPro" id="IPR009060">
    <property type="entry name" value="UBA-like_sf"/>
</dbReference>
<dbReference type="NCBIfam" id="TIGR00116">
    <property type="entry name" value="tsf"/>
    <property type="match status" value="1"/>
</dbReference>
<dbReference type="PANTHER" id="PTHR11741">
    <property type="entry name" value="ELONGATION FACTOR TS"/>
    <property type="match status" value="1"/>
</dbReference>
<dbReference type="PANTHER" id="PTHR11741:SF0">
    <property type="entry name" value="ELONGATION FACTOR TS, MITOCHONDRIAL"/>
    <property type="match status" value="1"/>
</dbReference>
<dbReference type="Pfam" id="PF00889">
    <property type="entry name" value="EF_TS"/>
    <property type="match status" value="1"/>
</dbReference>
<dbReference type="SUPFAM" id="SSF54713">
    <property type="entry name" value="Elongation factor Ts (EF-Ts), dimerisation domain"/>
    <property type="match status" value="1"/>
</dbReference>
<dbReference type="SUPFAM" id="SSF46934">
    <property type="entry name" value="UBA-like"/>
    <property type="match status" value="1"/>
</dbReference>
<dbReference type="PROSITE" id="PS01126">
    <property type="entry name" value="EF_TS_1"/>
    <property type="match status" value="1"/>
</dbReference>
<dbReference type="PROSITE" id="PS01127">
    <property type="entry name" value="EF_TS_2"/>
    <property type="match status" value="1"/>
</dbReference>
<reference key="1">
    <citation type="submission" date="2006-12" db="EMBL/GenBank/DDBJ databases">
        <title>Complete sequence of Mycobacterium vanbaalenii PYR-1.</title>
        <authorList>
            <consortium name="US DOE Joint Genome Institute"/>
            <person name="Copeland A."/>
            <person name="Lucas S."/>
            <person name="Lapidus A."/>
            <person name="Barry K."/>
            <person name="Detter J.C."/>
            <person name="Glavina del Rio T."/>
            <person name="Hammon N."/>
            <person name="Israni S."/>
            <person name="Dalin E."/>
            <person name="Tice H."/>
            <person name="Pitluck S."/>
            <person name="Singan V."/>
            <person name="Schmutz J."/>
            <person name="Larimer F."/>
            <person name="Land M."/>
            <person name="Hauser L."/>
            <person name="Kyrpides N."/>
            <person name="Anderson I.J."/>
            <person name="Miller C."/>
            <person name="Richardson P."/>
        </authorList>
    </citation>
    <scope>NUCLEOTIDE SEQUENCE [LARGE SCALE GENOMIC DNA]</scope>
    <source>
        <strain>DSM 7251 / JCM 13017 / BCRC 16820 / KCTC 9966 / NRRL B-24157 / PYR-1</strain>
    </source>
</reference>
<accession>A1T774</accession>
<protein>
    <recommendedName>
        <fullName evidence="1">Elongation factor Ts</fullName>
        <shortName evidence="1">EF-Ts</shortName>
    </recommendedName>
</protein>
<organism>
    <name type="scientific">Mycolicibacterium vanbaalenii (strain DSM 7251 / JCM 13017 / BCRC 16820 / KCTC 9966 / NRRL B-24157 / PYR-1)</name>
    <name type="common">Mycobacterium vanbaalenii</name>
    <dbReference type="NCBI Taxonomy" id="350058"/>
    <lineage>
        <taxon>Bacteria</taxon>
        <taxon>Bacillati</taxon>
        <taxon>Actinomycetota</taxon>
        <taxon>Actinomycetes</taxon>
        <taxon>Mycobacteriales</taxon>
        <taxon>Mycobacteriaceae</taxon>
        <taxon>Mycolicibacterium</taxon>
    </lineage>
</organism>
<keyword id="KW-0963">Cytoplasm</keyword>
<keyword id="KW-0251">Elongation factor</keyword>
<keyword id="KW-0648">Protein biosynthesis</keyword>